<comment type="function">
    <text evidence="3 4 6 7">Serine protease involved in the negative regulation of stomatal density and distribution. Not active on EPFL6 (AC Q1PEY6) (PubMed:20056678). Positive regulator of water use efficiency (WUE).</text>
</comment>
<comment type="subcellular location">
    <subcellularLocation>
        <location evidence="11">Secreted</location>
        <location evidence="11">Extracellular space</location>
        <location evidence="11">Apoplast</location>
    </subcellularLocation>
    <subcellularLocation>
        <location evidence="11">Cell membrane</location>
        <topology evidence="11">Peripheral membrane protein</topology>
    </subcellularLocation>
</comment>
<comment type="tissue specificity">
    <text evidence="3 4">Mostly expressed in leaves and cotyledons (especially in epidermal cells), and, to a lower extent, in floral buds, stems, and siliques. Strongly expressed in stomatal precursor cells (meristemoids and guard mother cells).</text>
</comment>
<comment type="induction">
    <text evidence="4 7">Negatively feedback controlled by components of an SDD1-dependent signaling pathway. Repressed by GTL1.</text>
</comment>
<comment type="disruption phenotype">
    <text evidence="3 5">Increased stomatal density and formation of clustered stomata by enhanced stomatal development initiation and extension of stomatal cell lineages. No major impact on photosynthesis, except 30% higher CO2 assimilation rates in low-light-adapted plants exposed to high light intensities.</text>
</comment>
<comment type="similarity">
    <text evidence="11">Belongs to the peptidase S8 family.</text>
</comment>
<protein>
    <recommendedName>
        <fullName evidence="10">Subtilisin-like protease SBT1.2</fullName>
        <ecNumber evidence="11">3.4.21.-</ecNumber>
    </recommendedName>
    <alternativeName>
        <fullName>Cucumisin-like serine protease SDD1</fullName>
    </alternativeName>
    <alternativeName>
        <fullName>Protein STOMATAL DENSITY AND DISTRIBUTION 1</fullName>
    </alternativeName>
    <alternativeName>
        <fullName evidence="10">Subtilase subfamily 1 member 2</fullName>
        <shortName evidence="10">AtSBT1.2</shortName>
    </alternativeName>
    <alternativeName>
        <fullName evidence="8">Subtilisin-like protease SDD1</fullName>
    </alternativeName>
</protein>
<feature type="signal peptide" evidence="1">
    <location>
        <begin position="1"/>
        <end position="20"/>
    </location>
</feature>
<feature type="chain" id="PRO_0000405797" description="Subtilisin-like protease SBT1.2">
    <location>
        <begin position="21"/>
        <end position="775"/>
    </location>
</feature>
<feature type="domain" description="Inhibitor I9" evidence="1">
    <location>
        <begin position="27"/>
        <end position="111"/>
    </location>
</feature>
<feature type="domain" description="Peptidase S8" evidence="2">
    <location>
        <begin position="116"/>
        <end position="618"/>
    </location>
</feature>
<feature type="domain" description="PA">
    <location>
        <begin position="388"/>
        <end position="470"/>
    </location>
</feature>
<feature type="active site" description="Charge relay system" evidence="2">
    <location>
        <position position="146"/>
    </location>
</feature>
<feature type="active site" description="Charge relay system" evidence="2">
    <location>
        <position position="222"/>
    </location>
</feature>
<feature type="active site" description="Charge relay system" evidence="2">
    <location>
        <position position="552"/>
    </location>
</feature>
<feature type="glycosylation site" description="N-linked (GlcNAc...) asparagine" evidence="1">
    <location>
        <position position="472"/>
    </location>
</feature>
<feature type="glycosylation site" description="N-linked (GlcNAc...) asparagine" evidence="1">
    <location>
        <position position="544"/>
    </location>
</feature>
<feature type="glycosylation site" description="N-linked (GlcNAc...) asparagine" evidence="1">
    <location>
        <position position="652"/>
    </location>
</feature>
<organism>
    <name type="scientific">Arabidopsis thaliana</name>
    <name type="common">Mouse-ear cress</name>
    <dbReference type="NCBI Taxonomy" id="3702"/>
    <lineage>
        <taxon>Eukaryota</taxon>
        <taxon>Viridiplantae</taxon>
        <taxon>Streptophyta</taxon>
        <taxon>Embryophyta</taxon>
        <taxon>Tracheophyta</taxon>
        <taxon>Spermatophyta</taxon>
        <taxon>Magnoliopsida</taxon>
        <taxon>eudicotyledons</taxon>
        <taxon>Gunneridae</taxon>
        <taxon>Pentapetalae</taxon>
        <taxon>rosids</taxon>
        <taxon>malvids</taxon>
        <taxon>Brassicales</taxon>
        <taxon>Brassicaceae</taxon>
        <taxon>Camelineae</taxon>
        <taxon>Arabidopsis</taxon>
    </lineage>
</organism>
<name>SBT12_ARATH</name>
<gene>
    <name evidence="10" type="primary">SBT1.2</name>
    <name evidence="8" type="synonym">SDD1</name>
    <name evidence="12" type="ordered locus">At1g04110</name>
    <name evidence="9" type="ORF">F20D22.12</name>
</gene>
<sequence>MEPKPFFLCIIFLLFCSSSSEILQKQTYIVQLHPNSETAKTFASKFDWHLSFLQEAVLGVEEEEEEPSSRLLYSYGSAIEGFAAQLTESEAEILRYSPEVVAVRPDHVLQVQTTYSYKFLGLDGFGNSGVWSKSRFGQGTIIGVLDTGVWPESPSFDDTGMPSIPRKWKGICQEGESFSSSSCNRKLIGARFFIRGHRVANSPEESPNMPREYISARDSTGHGTHTASTVGGSSVSMANVLGNGAGVARGMAPGAHIAVYKVCWFNGCYSSDILAAIDVAIQDKVDVLSLSLGGFPIPLYDDTIAIGTFRAMERGISVICAAGNNGPIESSVANTAPWVSTIGAGTLDRRFPAVVRLANGKLLYGESLYPGKGIKNAGREVEVIYVTGGDKGSEFCLRGSLPREEIRGKMVICDRGVNGRSEKGEAVKEAGGVAMILANTEINQEEDSIDVHLLPATLIGYTESVLLKAYVNATVKPKARIIFGGTVIGRSRAPEVAQFSARGPSLANPSILKPDMIAPGVNIIAAWPQNLGPTGLPYDSRRVNFTVMSGTSMSCPHVSGITALIRSAYPNWSPAAIKSALMTTADLYDRQGKAIKDGNKPAGVFAIGAGHVNPQKAINPGLVYNIQPVDYITYLCTLGFTRSDILAITHKNVSCNGILRKNPGFSLNYPSIAVIFKRGKTTEMITRRVTNVGSPNSIYSVNVKAPEGIKVIVNPKRLVFKHVDQTLSYRVWFVLKKKNRGGKVASFAQGQLTWVNSHNLMQRVRSPISVTLKTN</sequence>
<keyword id="KW-0052">Apoplast</keyword>
<keyword id="KW-1003">Cell membrane</keyword>
<keyword id="KW-0325">Glycoprotein</keyword>
<keyword id="KW-0378">Hydrolase</keyword>
<keyword id="KW-0472">Membrane</keyword>
<keyword id="KW-0645">Protease</keyword>
<keyword id="KW-1185">Reference proteome</keyword>
<keyword id="KW-0964">Secreted</keyword>
<keyword id="KW-0720">Serine protease</keyword>
<keyword id="KW-0732">Signal</keyword>
<proteinExistence type="evidence at transcript level"/>
<evidence type="ECO:0000255" key="1"/>
<evidence type="ECO:0000255" key="2">
    <source>
        <dbReference type="PROSITE-ProRule" id="PRU01240"/>
    </source>
</evidence>
<evidence type="ECO:0000269" key="3">
    <source>
    </source>
</evidence>
<evidence type="ECO:0000269" key="4">
    <source>
    </source>
</evidence>
<evidence type="ECO:0000269" key="5">
    <source>
    </source>
</evidence>
<evidence type="ECO:0000269" key="6">
    <source>
    </source>
</evidence>
<evidence type="ECO:0000269" key="7">
    <source>
    </source>
</evidence>
<evidence type="ECO:0000303" key="8">
    <source>
    </source>
</evidence>
<evidence type="ECO:0000303" key="9">
    <source>
    </source>
</evidence>
<evidence type="ECO:0000303" key="10">
    <source>
    </source>
</evidence>
<evidence type="ECO:0000305" key="11"/>
<evidence type="ECO:0000312" key="12">
    <source>
        <dbReference type="Araport" id="AT1G04110"/>
    </source>
</evidence>
<reference key="1">
    <citation type="journal article" date="2000" name="Nature">
        <title>Sequence and analysis of chromosome 1 of the plant Arabidopsis thaliana.</title>
        <authorList>
            <person name="Theologis A."/>
            <person name="Ecker J.R."/>
            <person name="Palm C.J."/>
            <person name="Federspiel N.A."/>
            <person name="Kaul S."/>
            <person name="White O."/>
            <person name="Alonso J."/>
            <person name="Altafi H."/>
            <person name="Araujo R."/>
            <person name="Bowman C.L."/>
            <person name="Brooks S.Y."/>
            <person name="Buehler E."/>
            <person name="Chan A."/>
            <person name="Chao Q."/>
            <person name="Chen H."/>
            <person name="Cheuk R.F."/>
            <person name="Chin C.W."/>
            <person name="Chung M.K."/>
            <person name="Conn L."/>
            <person name="Conway A.B."/>
            <person name="Conway A.R."/>
            <person name="Creasy T.H."/>
            <person name="Dewar K."/>
            <person name="Dunn P."/>
            <person name="Etgu P."/>
            <person name="Feldblyum T.V."/>
            <person name="Feng J.-D."/>
            <person name="Fong B."/>
            <person name="Fujii C.Y."/>
            <person name="Gill J.E."/>
            <person name="Goldsmith A.D."/>
            <person name="Haas B."/>
            <person name="Hansen N.F."/>
            <person name="Hughes B."/>
            <person name="Huizar L."/>
            <person name="Hunter J.L."/>
            <person name="Jenkins J."/>
            <person name="Johnson-Hopson C."/>
            <person name="Khan S."/>
            <person name="Khaykin E."/>
            <person name="Kim C.J."/>
            <person name="Koo H.L."/>
            <person name="Kremenetskaia I."/>
            <person name="Kurtz D.B."/>
            <person name="Kwan A."/>
            <person name="Lam B."/>
            <person name="Langin-Hooper S."/>
            <person name="Lee A."/>
            <person name="Lee J.M."/>
            <person name="Lenz C.A."/>
            <person name="Li J.H."/>
            <person name="Li Y.-P."/>
            <person name="Lin X."/>
            <person name="Liu S.X."/>
            <person name="Liu Z.A."/>
            <person name="Luros J.S."/>
            <person name="Maiti R."/>
            <person name="Marziali A."/>
            <person name="Militscher J."/>
            <person name="Miranda M."/>
            <person name="Nguyen M."/>
            <person name="Nierman W.C."/>
            <person name="Osborne B.I."/>
            <person name="Pai G."/>
            <person name="Peterson J."/>
            <person name="Pham P.K."/>
            <person name="Rizzo M."/>
            <person name="Rooney T."/>
            <person name="Rowley D."/>
            <person name="Sakano H."/>
            <person name="Salzberg S.L."/>
            <person name="Schwartz J.R."/>
            <person name="Shinn P."/>
            <person name="Southwick A.M."/>
            <person name="Sun H."/>
            <person name="Tallon L.J."/>
            <person name="Tambunga G."/>
            <person name="Toriumi M.J."/>
            <person name="Town C.D."/>
            <person name="Utterback T."/>
            <person name="Van Aken S."/>
            <person name="Vaysberg M."/>
            <person name="Vysotskaia V.S."/>
            <person name="Walker M."/>
            <person name="Wu D."/>
            <person name="Yu G."/>
            <person name="Fraser C.M."/>
            <person name="Venter J.C."/>
            <person name="Davis R.W."/>
        </authorList>
    </citation>
    <scope>NUCLEOTIDE SEQUENCE [LARGE SCALE GENOMIC DNA]</scope>
    <source>
        <strain>cv. Columbia</strain>
    </source>
</reference>
<reference key="2">
    <citation type="journal article" date="2017" name="Plant J.">
        <title>Araport11: a complete reannotation of the Arabidopsis thaliana reference genome.</title>
        <authorList>
            <person name="Cheng C.Y."/>
            <person name="Krishnakumar V."/>
            <person name="Chan A.P."/>
            <person name="Thibaud-Nissen F."/>
            <person name="Schobel S."/>
            <person name="Town C.D."/>
        </authorList>
    </citation>
    <scope>GENOME REANNOTATION</scope>
    <source>
        <strain>cv. Columbia</strain>
    </source>
</reference>
<reference key="3">
    <citation type="journal article" date="2000" name="Genes Dev.">
        <title>A subtilisin-like serine protease involved in the regulation of stomatal density and distribution in Arabidopsis thaliana.</title>
        <authorList>
            <person name="Berger D."/>
            <person name="Altmann T."/>
        </authorList>
    </citation>
    <scope>FUNCTION</scope>
    <scope>DISRUPTION PHENOTYPE</scope>
    <scope>TISSUE SPECIFICITY</scope>
</reference>
<reference key="4">
    <citation type="journal article" date="2002" name="Plant Cell">
        <title>The subtilisin-like serine protease SDD1 mediates cell-to-cell signaling during Arabidopsis stomatal development.</title>
        <authorList>
            <person name="Von Groll U."/>
            <person name="Berger D."/>
            <person name="Altmann T."/>
        </authorList>
    </citation>
    <scope>FUNCTION</scope>
    <scope>TISSUE SPECIFICITY</scope>
    <scope>INDUCTION</scope>
    <scope>PROBABLE SUBCELLULAR LOCATION</scope>
    <source>
        <strain>cv. C24</strain>
    </source>
</reference>
<reference key="5">
    <citation type="journal article" date="2003" name="J. Exp. Bot.">
        <title>Photosynthetic performance of an Arabidopsis mutant with elevated stomatal density (sdd1-1) under different light regimes.</title>
        <authorList>
            <person name="Schlueter U."/>
            <person name="Muschak M."/>
            <person name="Berger D."/>
            <person name="Altmann T."/>
        </authorList>
    </citation>
    <scope>DISRUPTION PHENOTYPE</scope>
</reference>
<reference key="6">
    <citation type="journal article" date="2005" name="PLoS Comput. Biol.">
        <title>Inferring hypotheses on functional relationships of genes: Analysis of the Arabidopsis thaliana subtilase gene family.</title>
        <authorList>
            <person name="Rautengarten C."/>
            <person name="Steinhauser D."/>
            <person name="Bussis D."/>
            <person name="Stintzi A."/>
            <person name="Schaller A."/>
            <person name="Kopka J."/>
            <person name="Altmann T."/>
        </authorList>
    </citation>
    <scope>GENE FAMILY</scope>
    <scope>NOMENCLATURE</scope>
</reference>
<reference key="7">
    <citation type="journal article" date="2008" name="New Phytol.">
        <title>Influence of environmental factors on stomatal development.</title>
        <authorList>
            <person name="Casson S."/>
            <person name="Gray J.E."/>
        </authorList>
    </citation>
    <scope>REVIEW</scope>
</reference>
<reference key="8">
    <citation type="journal article" date="2009" name="Bioessays">
        <title>Cell fate transitions during stomatal development.</title>
        <authorList>
            <person name="Serna L."/>
        </authorList>
    </citation>
    <scope>REVIEW</scope>
</reference>
<reference key="9">
    <citation type="journal article" date="2010" name="Development">
        <title>Regional specification of stomatal production by the putative ligand CHALLAH.</title>
        <authorList>
            <person name="Abrash E.B."/>
            <person name="Bergmann D.C."/>
        </authorList>
    </citation>
    <scope>FUNCTION</scope>
    <source>
        <strain>cv. Columbia</strain>
    </source>
</reference>
<reference key="10">
    <citation type="journal article" date="2010" name="Plant Cell">
        <title>The Arabidopsis GTL1 transcription factor regulates water use efficiency and drought tolerance by modulating stomatal density via transrepression of SDD1.</title>
        <authorList>
            <person name="Yoo C.Y."/>
            <person name="Pence H.E."/>
            <person name="Jin J.B."/>
            <person name="Miura K."/>
            <person name="Gosney M.J."/>
            <person name="Hasegawa P.M."/>
            <person name="Mickelbart M.V."/>
        </authorList>
    </citation>
    <scope>FUNCTION</scope>
    <scope>INDUCTION BY GTL1</scope>
    <source>
        <strain>cv. Columbia</strain>
    </source>
</reference>
<accession>O64495</accession>
<dbReference type="EC" id="3.4.21.-" evidence="11"/>
<dbReference type="EMBL" id="AC002411">
    <property type="protein sequence ID" value="AAC16749.1"/>
    <property type="molecule type" value="Genomic_DNA"/>
</dbReference>
<dbReference type="EMBL" id="CP002684">
    <property type="protein sequence ID" value="AEE27657.1"/>
    <property type="molecule type" value="Genomic_DNA"/>
</dbReference>
<dbReference type="PIR" id="T00962">
    <property type="entry name" value="T00962"/>
</dbReference>
<dbReference type="RefSeq" id="NP_563701.1">
    <property type="nucleotide sequence ID" value="NM_100292.2"/>
</dbReference>
<dbReference type="SMR" id="O64495"/>
<dbReference type="FunCoup" id="O64495">
    <property type="interactions" value="33"/>
</dbReference>
<dbReference type="STRING" id="3702.O64495"/>
<dbReference type="MEROPS" id="S08.084"/>
<dbReference type="GlyCosmos" id="O64495">
    <property type="glycosylation" value="3 sites, No reported glycans"/>
</dbReference>
<dbReference type="GlyGen" id="O64495">
    <property type="glycosylation" value="3 sites"/>
</dbReference>
<dbReference type="PaxDb" id="3702-AT1G04110.1"/>
<dbReference type="ProteomicsDB" id="226651"/>
<dbReference type="EnsemblPlants" id="AT1G04110.1">
    <property type="protein sequence ID" value="AT1G04110.1"/>
    <property type="gene ID" value="AT1G04110"/>
</dbReference>
<dbReference type="GeneID" id="839287"/>
<dbReference type="Gramene" id="AT1G04110.1">
    <property type="protein sequence ID" value="AT1G04110.1"/>
    <property type="gene ID" value="AT1G04110"/>
</dbReference>
<dbReference type="KEGG" id="ath:AT1G04110"/>
<dbReference type="Araport" id="AT1G04110"/>
<dbReference type="TAIR" id="AT1G04110">
    <property type="gene designation" value="SDD1"/>
</dbReference>
<dbReference type="eggNOG" id="ENOG502QV3N">
    <property type="taxonomic scope" value="Eukaryota"/>
</dbReference>
<dbReference type="HOGENOM" id="CLU_000625_4_6_1"/>
<dbReference type="InParanoid" id="O64495"/>
<dbReference type="OMA" id="CWLNGCY"/>
<dbReference type="PhylomeDB" id="O64495"/>
<dbReference type="PRO" id="PR:O64495"/>
<dbReference type="Proteomes" id="UP000006548">
    <property type="component" value="Chromosome 1"/>
</dbReference>
<dbReference type="ExpressionAtlas" id="O64495">
    <property type="expression patterns" value="baseline and differential"/>
</dbReference>
<dbReference type="GO" id="GO:0048046">
    <property type="term" value="C:apoplast"/>
    <property type="evidence" value="ECO:0007669"/>
    <property type="project" value="UniProtKB-SubCell"/>
</dbReference>
<dbReference type="GO" id="GO:0009897">
    <property type="term" value="C:external side of plasma membrane"/>
    <property type="evidence" value="ECO:0000314"/>
    <property type="project" value="TAIR"/>
</dbReference>
<dbReference type="GO" id="GO:0004252">
    <property type="term" value="F:serine-type endopeptidase activity"/>
    <property type="evidence" value="ECO:0000250"/>
    <property type="project" value="TAIR"/>
</dbReference>
<dbReference type="GO" id="GO:0006508">
    <property type="term" value="P:proteolysis"/>
    <property type="evidence" value="ECO:0007669"/>
    <property type="project" value="UniProtKB-KW"/>
</dbReference>
<dbReference type="GO" id="GO:0042127">
    <property type="term" value="P:regulation of cell population proliferation"/>
    <property type="evidence" value="ECO:0000315"/>
    <property type="project" value="TAIR"/>
</dbReference>
<dbReference type="GO" id="GO:0010103">
    <property type="term" value="P:stomatal complex morphogenesis"/>
    <property type="evidence" value="ECO:0000315"/>
    <property type="project" value="TAIR"/>
</dbReference>
<dbReference type="CDD" id="cd02120">
    <property type="entry name" value="PA_subtilisin_like"/>
    <property type="match status" value="1"/>
</dbReference>
<dbReference type="CDD" id="cd04852">
    <property type="entry name" value="Peptidases_S8_3"/>
    <property type="match status" value="1"/>
</dbReference>
<dbReference type="FunFam" id="3.40.50.200:FF:000006">
    <property type="entry name" value="Subtilisin-like protease SBT1.5"/>
    <property type="match status" value="1"/>
</dbReference>
<dbReference type="FunFam" id="3.50.30.30:FF:000005">
    <property type="entry name" value="subtilisin-like protease SBT1.5"/>
    <property type="match status" value="1"/>
</dbReference>
<dbReference type="FunFam" id="3.30.70.80:FF:000003">
    <property type="entry name" value="Subtilisin-like protease SBT1.9"/>
    <property type="match status" value="1"/>
</dbReference>
<dbReference type="Gene3D" id="2.60.40.2310">
    <property type="match status" value="1"/>
</dbReference>
<dbReference type="Gene3D" id="3.50.30.30">
    <property type="match status" value="1"/>
</dbReference>
<dbReference type="Gene3D" id="3.30.70.80">
    <property type="entry name" value="Peptidase S8 propeptide/proteinase inhibitor I9"/>
    <property type="match status" value="1"/>
</dbReference>
<dbReference type="Gene3D" id="3.40.50.200">
    <property type="entry name" value="Peptidase S8/S53 domain"/>
    <property type="match status" value="1"/>
</dbReference>
<dbReference type="InterPro" id="IPR003137">
    <property type="entry name" value="PA_domain"/>
</dbReference>
<dbReference type="InterPro" id="IPR000209">
    <property type="entry name" value="Peptidase_S8/S53_dom"/>
</dbReference>
<dbReference type="InterPro" id="IPR036852">
    <property type="entry name" value="Peptidase_S8/S53_dom_sf"/>
</dbReference>
<dbReference type="InterPro" id="IPR023828">
    <property type="entry name" value="Peptidase_S8_Ser-AS"/>
</dbReference>
<dbReference type="InterPro" id="IPR015500">
    <property type="entry name" value="Peptidase_S8_subtilisin-rel"/>
</dbReference>
<dbReference type="InterPro" id="IPR034197">
    <property type="entry name" value="Peptidases_S8_3"/>
</dbReference>
<dbReference type="InterPro" id="IPR010259">
    <property type="entry name" value="S8pro/Inhibitor_I9"/>
</dbReference>
<dbReference type="InterPro" id="IPR037045">
    <property type="entry name" value="S8pro/Inhibitor_I9_sf"/>
</dbReference>
<dbReference type="InterPro" id="IPR045051">
    <property type="entry name" value="SBT"/>
</dbReference>
<dbReference type="InterPro" id="IPR041469">
    <property type="entry name" value="Subtilisin-like_FN3"/>
</dbReference>
<dbReference type="PANTHER" id="PTHR10795">
    <property type="entry name" value="PROPROTEIN CONVERTASE SUBTILISIN/KEXIN"/>
    <property type="match status" value="1"/>
</dbReference>
<dbReference type="Pfam" id="PF17766">
    <property type="entry name" value="fn3_6"/>
    <property type="match status" value="1"/>
</dbReference>
<dbReference type="Pfam" id="PF05922">
    <property type="entry name" value="Inhibitor_I9"/>
    <property type="match status" value="1"/>
</dbReference>
<dbReference type="Pfam" id="PF02225">
    <property type="entry name" value="PA"/>
    <property type="match status" value="1"/>
</dbReference>
<dbReference type="Pfam" id="PF00082">
    <property type="entry name" value="Peptidase_S8"/>
    <property type="match status" value="1"/>
</dbReference>
<dbReference type="PRINTS" id="PR00723">
    <property type="entry name" value="SUBTILISIN"/>
</dbReference>
<dbReference type="SUPFAM" id="SSF52743">
    <property type="entry name" value="Subtilisin-like"/>
    <property type="match status" value="1"/>
</dbReference>
<dbReference type="PROSITE" id="PS51892">
    <property type="entry name" value="SUBTILASE"/>
    <property type="match status" value="1"/>
</dbReference>
<dbReference type="PROSITE" id="PS00138">
    <property type="entry name" value="SUBTILASE_SER"/>
    <property type="match status" value="1"/>
</dbReference>